<proteinExistence type="evidence at protein level"/>
<dbReference type="EC" id="3.2.1.147"/>
<dbReference type="EMBL" id="AF203780">
    <property type="protein sequence ID" value="AAL25999.1"/>
    <property type="molecule type" value="mRNA"/>
</dbReference>
<dbReference type="PDB" id="1WCG">
    <property type="method" value="X-ray"/>
    <property type="resolution" value="1.10 A"/>
    <property type="chains" value="A/B=1-464"/>
</dbReference>
<dbReference type="PDBsum" id="1WCG"/>
<dbReference type="SMR" id="Q95X01"/>
<dbReference type="CAZy" id="GH1">
    <property type="family name" value="Glycoside Hydrolase Family 1"/>
</dbReference>
<dbReference type="BRENDA" id="3.2.1.147">
    <property type="organism ID" value="981"/>
</dbReference>
<dbReference type="EvolutionaryTrace" id="Q95X01"/>
<dbReference type="GO" id="GO:0008422">
    <property type="term" value="F:beta-glucosidase activity"/>
    <property type="evidence" value="ECO:0007669"/>
    <property type="project" value="TreeGrafter"/>
</dbReference>
<dbReference type="GO" id="GO:0046872">
    <property type="term" value="F:metal ion binding"/>
    <property type="evidence" value="ECO:0007669"/>
    <property type="project" value="UniProtKB-KW"/>
</dbReference>
<dbReference type="GO" id="GO:0019137">
    <property type="term" value="F:thioglucosidase activity"/>
    <property type="evidence" value="ECO:0007669"/>
    <property type="project" value="UniProtKB-EC"/>
</dbReference>
<dbReference type="GO" id="GO:0005975">
    <property type="term" value="P:carbohydrate metabolic process"/>
    <property type="evidence" value="ECO:0007669"/>
    <property type="project" value="InterPro"/>
</dbReference>
<dbReference type="FunFam" id="3.20.20.80:FF:000013">
    <property type="entry name" value="lactase-phlorizin hydrolase"/>
    <property type="match status" value="1"/>
</dbReference>
<dbReference type="Gene3D" id="3.20.20.80">
    <property type="entry name" value="Glycosidases"/>
    <property type="match status" value="1"/>
</dbReference>
<dbReference type="InterPro" id="IPR001360">
    <property type="entry name" value="Glyco_hydro_1"/>
</dbReference>
<dbReference type="InterPro" id="IPR033132">
    <property type="entry name" value="Glyco_hydro_1_N_CS"/>
</dbReference>
<dbReference type="InterPro" id="IPR017853">
    <property type="entry name" value="Glycoside_hydrolase_SF"/>
</dbReference>
<dbReference type="PANTHER" id="PTHR10353">
    <property type="entry name" value="GLYCOSYL HYDROLASE"/>
    <property type="match status" value="1"/>
</dbReference>
<dbReference type="PANTHER" id="PTHR10353:SF36">
    <property type="entry name" value="LP05116P"/>
    <property type="match status" value="1"/>
</dbReference>
<dbReference type="Pfam" id="PF00232">
    <property type="entry name" value="Glyco_hydro_1"/>
    <property type="match status" value="1"/>
</dbReference>
<dbReference type="PRINTS" id="PR00131">
    <property type="entry name" value="GLHYDRLASE1"/>
</dbReference>
<dbReference type="SUPFAM" id="SSF51445">
    <property type="entry name" value="(Trans)glycosidases"/>
    <property type="match status" value="1"/>
</dbReference>
<dbReference type="PROSITE" id="PS00653">
    <property type="entry name" value="GLYCOSYL_HYDROL_F1_2"/>
    <property type="match status" value="1"/>
</dbReference>
<feature type="chain" id="PRO_0000392945" description="Myrosinase 1">
    <location>
        <begin position="1"/>
        <end position="464"/>
    </location>
</feature>
<feature type="active site" description="Nucleophile" evidence="6">
    <location>
        <position position="167"/>
    </location>
</feature>
<feature type="active site" description="Proton donor" evidence="6">
    <location>
        <position position="374"/>
    </location>
</feature>
<feature type="binding site" evidence="1">
    <location>
        <position position="19"/>
    </location>
    <ligand>
        <name>substrate</name>
    </ligand>
</feature>
<feature type="binding site" evidence="1">
    <location>
        <position position="39"/>
    </location>
    <ligand>
        <name>Zn(2+)</name>
        <dbReference type="ChEBI" id="CHEBI:29105"/>
        <note>ligand shared between dimeric partners</note>
    </ligand>
</feature>
<feature type="binding site" evidence="1">
    <location>
        <position position="52"/>
    </location>
    <ligand>
        <name>Zn(2+)</name>
        <dbReference type="ChEBI" id="CHEBI:29105"/>
        <note>ligand shared between dimeric partners</note>
    </ligand>
</feature>
<feature type="binding site" evidence="1">
    <location>
        <position position="122"/>
    </location>
    <ligand>
        <name>substrate</name>
    </ligand>
</feature>
<feature type="binding site" evidence="1">
    <location>
        <position position="166"/>
    </location>
    <ligand>
        <name>substrate</name>
    </ligand>
</feature>
<feature type="glycosylation site" description="N-linked (GlcNAc...) asparagine" evidence="2">
    <location>
        <position position="397"/>
    </location>
</feature>
<feature type="sequence conflict" description="In Ref. 3; AA sequence." evidence="9" ref="3">
    <original>N</original>
    <variation>P</variation>
    <location>
        <position position="107"/>
    </location>
</feature>
<feature type="sequence conflict" description="In Ref. 3; AA sequence." evidence="9" ref="3">
    <original>P</original>
    <variation>N</variation>
    <location>
        <position position="322"/>
    </location>
</feature>
<feature type="strand" evidence="11">
    <location>
        <begin position="10"/>
        <end position="14"/>
    </location>
</feature>
<feature type="helix" evidence="11">
    <location>
        <begin position="17"/>
        <end position="20"/>
    </location>
</feature>
<feature type="helix" evidence="11">
    <location>
        <begin position="33"/>
        <end position="40"/>
    </location>
</feature>
<feature type="helix" evidence="11">
    <location>
        <begin position="42"/>
        <end position="44"/>
    </location>
</feature>
<feature type="strand" evidence="11">
    <location>
        <begin position="51"/>
        <end position="53"/>
    </location>
</feature>
<feature type="helix" evidence="11">
    <location>
        <begin position="57"/>
        <end position="71"/>
    </location>
</feature>
<feature type="strand" evidence="11">
    <location>
        <begin position="74"/>
        <end position="79"/>
    </location>
</feature>
<feature type="helix" evidence="11">
    <location>
        <begin position="82"/>
        <end position="85"/>
    </location>
</feature>
<feature type="helix" evidence="11">
    <location>
        <begin position="96"/>
        <end position="111"/>
    </location>
</feature>
<feature type="strand" evidence="11">
    <location>
        <begin position="115"/>
        <end position="123"/>
    </location>
</feature>
<feature type="helix" evidence="11">
    <location>
        <begin position="127"/>
        <end position="131"/>
    </location>
</feature>
<feature type="helix" evidence="11">
    <location>
        <begin position="134"/>
        <end position="136"/>
    </location>
</feature>
<feature type="helix" evidence="11">
    <location>
        <begin position="140"/>
        <end position="155"/>
    </location>
</feature>
<feature type="turn" evidence="11">
    <location>
        <begin position="156"/>
        <end position="158"/>
    </location>
</feature>
<feature type="strand" evidence="11">
    <location>
        <begin position="161"/>
        <end position="166"/>
    </location>
</feature>
<feature type="helix" evidence="11">
    <location>
        <begin position="168"/>
        <end position="176"/>
    </location>
</feature>
<feature type="strand" evidence="11">
    <location>
        <begin position="177"/>
        <end position="180"/>
    </location>
</feature>
<feature type="helix" evidence="11">
    <location>
        <begin position="187"/>
        <end position="212"/>
    </location>
</feature>
<feature type="helix" evidence="11">
    <location>
        <begin position="214"/>
        <end position="217"/>
    </location>
</feature>
<feature type="strand" evidence="11">
    <location>
        <begin position="220"/>
        <end position="225"/>
    </location>
</feature>
<feature type="strand" evidence="11">
    <location>
        <begin position="229"/>
        <end position="234"/>
    </location>
</feature>
<feature type="helix" evidence="11">
    <location>
        <begin position="238"/>
        <end position="251"/>
    </location>
</feature>
<feature type="helix" evidence="11">
    <location>
        <begin position="253"/>
        <end position="260"/>
    </location>
</feature>
<feature type="strand" evidence="11">
    <location>
        <begin position="262"/>
        <end position="264"/>
    </location>
</feature>
<feature type="helix" evidence="11">
    <location>
        <begin position="266"/>
        <end position="278"/>
    </location>
</feature>
<feature type="helix" evidence="11">
    <location>
        <begin position="291"/>
        <end position="297"/>
    </location>
</feature>
<feature type="strand" evidence="11">
    <location>
        <begin position="302"/>
        <end position="307"/>
    </location>
</feature>
<feature type="strand" evidence="11">
    <location>
        <begin position="311"/>
        <end position="317"/>
    </location>
</feature>
<feature type="helix" evidence="11">
    <location>
        <begin position="326"/>
        <end position="328"/>
    </location>
</feature>
<feature type="strand" evidence="11">
    <location>
        <begin position="330"/>
        <end position="333"/>
    </location>
</feature>
<feature type="helix" evidence="11">
    <location>
        <begin position="336"/>
        <end position="338"/>
    </location>
</feature>
<feature type="helix" evidence="11">
    <location>
        <begin position="351"/>
        <end position="365"/>
    </location>
</feature>
<feature type="strand" evidence="11">
    <location>
        <begin position="370"/>
        <end position="375"/>
    </location>
</feature>
<feature type="helix" evidence="11">
    <location>
        <begin position="386"/>
        <end position="406"/>
    </location>
</feature>
<feature type="strand" evidence="11">
    <location>
        <begin position="410"/>
        <end position="416"/>
    </location>
</feature>
<feature type="helix" evidence="11">
    <location>
        <begin position="424"/>
        <end position="429"/>
    </location>
</feature>
<feature type="strand" evidence="11">
    <location>
        <begin position="434"/>
        <end position="437"/>
    </location>
</feature>
<feature type="strand" evidence="11">
    <location>
        <begin position="446"/>
        <end position="448"/>
    </location>
</feature>
<feature type="helix" evidence="11">
    <location>
        <begin position="450"/>
        <end position="461"/>
    </location>
</feature>
<accession>Q95X01</accession>
<comment type="function">
    <text evidence="5 7">Hydrolyzes glucosinolates to a labile aglycone. This rapidly undergoes spontaneous rearrangement, eliminating sulfur to yield a number of toxic metabolites. Thereby developing a chemical defense system that exploits and mimics the host plant.</text>
</comment>
<comment type="catalytic activity">
    <reaction evidence="5">
        <text>a thioglucoside + H2O = a sugar + a thiol.</text>
        <dbReference type="EC" id="3.2.1.147"/>
    </reaction>
</comment>
<comment type="biophysicochemical properties">
    <kinetics>
        <KM evidence="3">0.613 mM for allylglucosinolate</KM>
        <KM evidence="3">0.915 mM for benzylglucosinolate</KM>
    </kinetics>
    <phDependence>
        <text evidence="3">Optimum pH is 5.5 with sinigrin as substrate.</text>
    </phDependence>
</comment>
<comment type="subunit">
    <text evidence="6">Homodimer.</text>
</comment>
<comment type="tissue specificity">
    <text evidence="4 7">Expressed in the skeletal muscle tissues surrounding the head, abdomen and thorax. Not expressed in flight muscles (at protein level).</text>
</comment>
<comment type="developmental stage">
    <text evidence="7">Expression in the head and thoracic muscle starts during embryonic development and levels continue to accumulate after the nymphs are born (at protein level).</text>
</comment>
<comment type="mass spectrometry"/>
<comment type="similarity">
    <text evidence="5">Belongs to the glycosyl hydrolase 1 family.</text>
</comment>
<sequence>MDYKFPKDFMFGTSTASYQIEGGWNEDGKGENIWDRLVHTSPEVIKDGTNGDIACDSYHKYKEDVAIIKDLNLKFYRFSISWARIAPSGVMNSLEPKGIAYYNNLINELIKNDIIPLVTMYHWDLPQYLQDLGGWVNPIMSDYFKEYARVLFTYFGDRVKWWITFNEPIAVCKGYSIKAYAPNLNLKTTGHYLAGHTQLIAHGKAYRLYEEMFKPTQNGKISISISGVFFMPKNAESDDDIETAERANQFERGWFGHPVYKGDYPPIMKKWVDQKSKEEGLPWSKLPKFTKDEIKLLKGTADFYALNHYSSRLVTFGSDPNPNFNPDASYVTSVDEAWLKPNETPYIIPVPEGLRKLLIWLKNEYGNPQLLITENGYGDDGQLDDFEKISYLKNYLNATLQAMYEDKCNVIGYTVWSLLDNFEWFYGYSIHFGLVKIDFNDPQRTRTKRESYTYFKNVVSTGKP</sequence>
<organism>
    <name type="scientific">Brevicoryne brassicae</name>
    <name type="common">Mealy cabbage aphid</name>
    <dbReference type="NCBI Taxonomy" id="69196"/>
    <lineage>
        <taxon>Eukaryota</taxon>
        <taxon>Metazoa</taxon>
        <taxon>Ecdysozoa</taxon>
        <taxon>Arthropoda</taxon>
        <taxon>Hexapoda</taxon>
        <taxon>Insecta</taxon>
        <taxon>Pterygota</taxon>
        <taxon>Neoptera</taxon>
        <taxon>Paraneoptera</taxon>
        <taxon>Hemiptera</taxon>
        <taxon>Sternorrhyncha</taxon>
        <taxon>Aphidomorpha</taxon>
        <taxon>Aphidoidea</taxon>
        <taxon>Aphididae</taxon>
        <taxon>Macrosiphini</taxon>
        <taxon>Brevicoryne</taxon>
    </lineage>
</organism>
<keyword id="KW-0002">3D-structure</keyword>
<keyword id="KW-0903">Direct protein sequencing</keyword>
<keyword id="KW-0325">Glycoprotein</keyword>
<keyword id="KW-0326">Glycosidase</keyword>
<keyword id="KW-0378">Hydrolase</keyword>
<keyword id="KW-0479">Metal-binding</keyword>
<keyword id="KW-0862">Zinc</keyword>
<reference evidence="9 10" key="1">
    <citation type="journal article" date="2002" name="Insect Biochem. Mol. Biol.">
        <title>Characterization and evolution of a myrosinase from the cabbage aphid Brevicoryne brassicae.</title>
        <authorList>
            <person name="Jones A.M."/>
            <person name="Winge P."/>
            <person name="Bones A.M."/>
            <person name="Cole R."/>
            <person name="Rossiter J.T."/>
        </authorList>
    </citation>
    <scope>NUCLEOTIDE SEQUENCE [MRNA]</scope>
    <scope>FUNCTION</scope>
    <scope>CATALYTIC ACTIVITY</scope>
    <scope>PROTEIN SEQUENCE OF 98-111; 188-197; 253-261; 313-327 AND 389-393</scope>
</reference>
<reference evidence="9" key="2">
    <citation type="journal article" date="2005" name="Insect Biochem. Mol. Biol.">
        <title>Crystal structure at 1.1 Angstroms resolution of an insect myrosinase from Brevicoryne brassicae shows its close relationship to beta-glucosidases.</title>
        <authorList>
            <person name="Husebye H."/>
            <person name="Arzt S."/>
            <person name="Burmeister W.P."/>
            <person name="Hartel F.V."/>
            <person name="Brandt A."/>
            <person name="Rossiter J.T."/>
            <person name="Bones A.M."/>
        </authorList>
    </citation>
    <scope>NUCLEOTIDE SEQUENCE [MRNA]</scope>
    <scope>SUBUNIT</scope>
    <scope>ACTIVE SITE GLU-167</scope>
    <scope>ACTIVE SITE GLU-374</scope>
    <scope>X-RAY CRYSTALLOGRAPHY (1.1 ANGSTROMS)</scope>
</reference>
<reference evidence="9" key="3">
    <citation type="journal article" date="2001" name="Insect Biochem. Mol. Biol.">
        <title>Purification and characterisation of a non-plant myrosinase from the cabbage aphid Brevicoryne brassicae (L.).</title>
        <authorList>
            <person name="Jones A.M."/>
            <person name="Bridges M."/>
            <person name="Bones A.M."/>
            <person name="Cole R."/>
            <person name="Rossiter J.T."/>
        </authorList>
    </citation>
    <scope>BIOPHYSICOCHEMICAL PROPERTIES</scope>
    <scope>MASS SPECTROMETRY</scope>
    <scope>PROTEIN SEQUENCE OF 98-111; 188-197; 253-261; 313-327 AND 389-393</scope>
</reference>
<reference evidence="9" key="4">
    <citation type="journal article" date="2002" name="Proc. R. Soc. B">
        <title>Spatial organization of the glucosinolate-myrosinase system in brassica specialist aphids is similar to that of the host plant.</title>
        <authorList>
            <person name="Bridges M."/>
            <person name="Jones A.M."/>
            <person name="Bones A.M."/>
            <person name="Hodgson C."/>
            <person name="Cole R."/>
            <person name="Bartlet E."/>
            <person name="Wallsgrove R."/>
            <person name="Karapapa V.K."/>
            <person name="Watts N."/>
            <person name="Rossiter J.T."/>
        </authorList>
    </citation>
    <scope>TISSUE SPECIFICITY</scope>
</reference>
<reference evidence="9" key="5">
    <citation type="journal article" date="2007" name="Proc. R. Soc. B">
        <title>The cabbage aphid: a walking mustard oil bomb.</title>
        <authorList>
            <person name="Kazana E."/>
            <person name="Pope T.W."/>
            <person name="Tibbles L."/>
            <person name="Bridges M."/>
            <person name="Pickett J.A."/>
            <person name="Bones A.M."/>
            <person name="Powell G."/>
            <person name="Rossiter J.T."/>
        </authorList>
    </citation>
    <scope>FUNCTION</scope>
    <scope>TISSUE SPECIFICITY</scope>
    <scope>DEVELOPMENTAL STAGE</scope>
</reference>
<protein>
    <recommendedName>
        <fullName evidence="8">Myrosinase 1</fullName>
        <ecNumber>3.2.1.147</ecNumber>
    </recommendedName>
    <alternativeName>
        <fullName evidence="8">Beta-glucosidase 1</fullName>
    </alternativeName>
    <alternativeName>
        <fullName evidence="8">Beta-thioglucosidase 1</fullName>
    </alternativeName>
    <alternativeName>
        <fullName evidence="8">Beta-thioglucosidase glucohydrolase 1</fullName>
    </alternativeName>
    <alternativeName>
        <fullName evidence="8">Sinigrinase 1</fullName>
    </alternativeName>
    <alternativeName>
        <fullName evidence="10">Thioglucosidase 1</fullName>
    </alternativeName>
</protein>
<evidence type="ECO:0000250" key="1">
    <source>
        <dbReference type="UniProtKB" id="P29736"/>
    </source>
</evidence>
<evidence type="ECO:0000255" key="2"/>
<evidence type="ECO:0000269" key="3">
    <source>
    </source>
</evidence>
<evidence type="ECO:0000269" key="4">
    <source>
    </source>
</evidence>
<evidence type="ECO:0000269" key="5">
    <source>
    </source>
</evidence>
<evidence type="ECO:0000269" key="6">
    <source>
    </source>
</evidence>
<evidence type="ECO:0000269" key="7">
    <source>
    </source>
</evidence>
<evidence type="ECO:0000303" key="8">
    <source>
    </source>
</evidence>
<evidence type="ECO:0000305" key="9"/>
<evidence type="ECO:0000312" key="10">
    <source>
        <dbReference type="EMBL" id="AAL25999.1"/>
    </source>
</evidence>
<evidence type="ECO:0007829" key="11">
    <source>
        <dbReference type="PDB" id="1WCG"/>
    </source>
</evidence>
<name>MYRO1_BREBR</name>